<keyword id="KW-0067">ATP-binding</keyword>
<keyword id="KW-0158">Chromosome</keyword>
<keyword id="KW-0963">Cytoplasm</keyword>
<keyword id="KW-0238">DNA-binding</keyword>
<keyword id="KW-0547">Nucleotide-binding</keyword>
<keyword id="KW-0539">Nucleus</keyword>
<keyword id="KW-1185">Reference proteome</keyword>
<feature type="chain" id="PRO_0000122935" description="DNA repair protein RAD51 homolog 1">
    <location>
        <begin position="1"/>
        <end position="339"/>
    </location>
</feature>
<feature type="domain" description="HhH">
    <location>
        <begin position="48"/>
        <end position="77"/>
    </location>
</feature>
<feature type="region of interest" description="Disordered" evidence="3">
    <location>
        <begin position="1"/>
        <end position="23"/>
    </location>
</feature>
<feature type="binding site" evidence="1">
    <location>
        <begin position="127"/>
        <end position="134"/>
    </location>
    <ligand>
        <name>ATP</name>
        <dbReference type="ChEBI" id="CHEBI:30616"/>
    </ligand>
</feature>
<dbReference type="EMBL" id="L09655">
    <property type="status" value="NOT_ANNOTATED_CDS"/>
    <property type="molecule type" value="mRNA"/>
</dbReference>
<dbReference type="EMBL" id="S59426">
    <property type="protein sequence ID" value="AAB26354.1"/>
    <property type="molecule type" value="mRNA"/>
</dbReference>
<dbReference type="PIR" id="S35642">
    <property type="entry name" value="S35642"/>
</dbReference>
<dbReference type="RefSeq" id="NP_990504.1">
    <property type="nucleotide sequence ID" value="NM_205173.1"/>
</dbReference>
<dbReference type="RefSeq" id="XP_015141632.1">
    <property type="nucleotide sequence ID" value="XM_015286146.1"/>
</dbReference>
<dbReference type="RefSeq" id="XP_015141633.1">
    <property type="nucleotide sequence ID" value="XM_015286147.1"/>
</dbReference>
<dbReference type="SMR" id="P37383"/>
<dbReference type="BioGRID" id="676352">
    <property type="interactions" value="3"/>
</dbReference>
<dbReference type="FunCoup" id="P37383">
    <property type="interactions" value="1647"/>
</dbReference>
<dbReference type="STRING" id="9031.ENSGALP00000046453"/>
<dbReference type="PaxDb" id="9031-ENSGALP00000032107"/>
<dbReference type="Ensembl" id="ENSGALT00010056413.1">
    <property type="protein sequence ID" value="ENSGALP00010034160.1"/>
    <property type="gene ID" value="ENSGALG00010023147.1"/>
</dbReference>
<dbReference type="GeneID" id="396086"/>
<dbReference type="KEGG" id="gga:396086"/>
<dbReference type="CTD" id="5888"/>
<dbReference type="VEuPathDB" id="HostDB:geneid_396086"/>
<dbReference type="eggNOG" id="KOG1433">
    <property type="taxonomic scope" value="Eukaryota"/>
</dbReference>
<dbReference type="GeneTree" id="ENSGT00940000156157"/>
<dbReference type="HOGENOM" id="CLU_041732_0_2_1"/>
<dbReference type="InParanoid" id="P37383"/>
<dbReference type="OMA" id="RAYNSNH"/>
<dbReference type="OrthoDB" id="10251254at2759"/>
<dbReference type="PhylomeDB" id="P37383"/>
<dbReference type="TreeFam" id="TF101218"/>
<dbReference type="Reactome" id="R-GGA-265976">
    <property type="pathway name" value="Homologous DNA pairing and strand exchange"/>
</dbReference>
<dbReference type="Reactome" id="R-GGA-351433">
    <property type="pathway name" value="ATM mediated phosphorylation of repair proteins"/>
</dbReference>
<dbReference type="Reactome" id="R-GGA-5685938">
    <property type="pathway name" value="HDR through Single Strand Annealing (SSA)"/>
</dbReference>
<dbReference type="Reactome" id="R-GGA-5685942">
    <property type="pathway name" value="HDR through Homologous Recombination (HRR)"/>
</dbReference>
<dbReference type="Reactome" id="R-GGA-5693568">
    <property type="pathway name" value="Resolution of D-loop Structures through Holliday Junction Intermediates"/>
</dbReference>
<dbReference type="Reactome" id="R-GGA-5693579">
    <property type="pathway name" value="Homologous DNA Pairing and Strand Exchange"/>
</dbReference>
<dbReference type="Reactome" id="R-GGA-5693616">
    <property type="pathway name" value="Presynaptic phase of homologous DNA pairing and strand exchange"/>
</dbReference>
<dbReference type="Reactome" id="R-GGA-912446">
    <property type="pathway name" value="Meiotic recombination"/>
</dbReference>
<dbReference type="PRO" id="PR:P37383"/>
<dbReference type="Proteomes" id="UP000000539">
    <property type="component" value="Chromosome 5"/>
</dbReference>
<dbReference type="Bgee" id="ENSGALG00000030313">
    <property type="expression patterns" value="Expressed in testis and 13 other cell types or tissues"/>
</dbReference>
<dbReference type="GO" id="GO:0000785">
    <property type="term" value="C:chromatin"/>
    <property type="evidence" value="ECO:0007669"/>
    <property type="project" value="Ensembl"/>
</dbReference>
<dbReference type="GO" id="GO:0005694">
    <property type="term" value="C:chromosome"/>
    <property type="evidence" value="ECO:0000250"/>
    <property type="project" value="UniProtKB"/>
</dbReference>
<dbReference type="GO" id="GO:0000781">
    <property type="term" value="C:chromosome, telomeric region"/>
    <property type="evidence" value="ECO:0007669"/>
    <property type="project" value="Ensembl"/>
</dbReference>
<dbReference type="GO" id="GO:0000793">
    <property type="term" value="C:condensed chromosome"/>
    <property type="evidence" value="ECO:0000250"/>
    <property type="project" value="UniProtKB"/>
</dbReference>
<dbReference type="GO" id="GO:0000794">
    <property type="term" value="C:condensed nuclear chromosome"/>
    <property type="evidence" value="ECO:0000250"/>
    <property type="project" value="UniProtKB"/>
</dbReference>
<dbReference type="GO" id="GO:0005737">
    <property type="term" value="C:cytoplasm"/>
    <property type="evidence" value="ECO:0000250"/>
    <property type="project" value="UniProtKB"/>
</dbReference>
<dbReference type="GO" id="GO:0005829">
    <property type="term" value="C:cytosol"/>
    <property type="evidence" value="ECO:0007669"/>
    <property type="project" value="Ensembl"/>
</dbReference>
<dbReference type="GO" id="GO:0000800">
    <property type="term" value="C:lateral element"/>
    <property type="evidence" value="ECO:0007669"/>
    <property type="project" value="Ensembl"/>
</dbReference>
<dbReference type="GO" id="GO:0001673">
    <property type="term" value="C:male germ cell nucleus"/>
    <property type="evidence" value="ECO:0007669"/>
    <property type="project" value="Ensembl"/>
</dbReference>
<dbReference type="GO" id="GO:0005739">
    <property type="term" value="C:mitochondrion"/>
    <property type="evidence" value="ECO:0007669"/>
    <property type="project" value="Ensembl"/>
</dbReference>
<dbReference type="GO" id="GO:0000228">
    <property type="term" value="C:nuclear chromosome"/>
    <property type="evidence" value="ECO:0000250"/>
    <property type="project" value="UniProtKB"/>
</dbReference>
<dbReference type="GO" id="GO:0000152">
    <property type="term" value="C:nuclear ubiquitin ligase complex"/>
    <property type="evidence" value="ECO:0007669"/>
    <property type="project" value="Ensembl"/>
</dbReference>
<dbReference type="GO" id="GO:0005730">
    <property type="term" value="C:nucleolus"/>
    <property type="evidence" value="ECO:0007669"/>
    <property type="project" value="Ensembl"/>
</dbReference>
<dbReference type="GO" id="GO:0005654">
    <property type="term" value="C:nucleoplasm"/>
    <property type="evidence" value="ECO:0000304"/>
    <property type="project" value="Reactome"/>
</dbReference>
<dbReference type="GO" id="GO:0005634">
    <property type="term" value="C:nucleus"/>
    <property type="evidence" value="ECO:0000250"/>
    <property type="project" value="UniProtKB"/>
</dbReference>
<dbReference type="GO" id="GO:0048471">
    <property type="term" value="C:perinuclear region of cytoplasm"/>
    <property type="evidence" value="ECO:0007669"/>
    <property type="project" value="Ensembl"/>
</dbReference>
<dbReference type="GO" id="GO:0016605">
    <property type="term" value="C:PML body"/>
    <property type="evidence" value="ECO:0007669"/>
    <property type="project" value="Ensembl"/>
</dbReference>
<dbReference type="GO" id="GO:0099182">
    <property type="term" value="C:presynaptic intermediate filament cytoskeleton"/>
    <property type="evidence" value="ECO:0007669"/>
    <property type="project" value="Ensembl"/>
</dbReference>
<dbReference type="GO" id="GO:0035861">
    <property type="term" value="C:site of double-strand break"/>
    <property type="evidence" value="ECO:0007669"/>
    <property type="project" value="Ensembl"/>
</dbReference>
<dbReference type="GO" id="GO:0005524">
    <property type="term" value="F:ATP binding"/>
    <property type="evidence" value="ECO:0007669"/>
    <property type="project" value="UniProtKB-KW"/>
</dbReference>
<dbReference type="GO" id="GO:0016887">
    <property type="term" value="F:ATP hydrolysis activity"/>
    <property type="evidence" value="ECO:0007669"/>
    <property type="project" value="InterPro"/>
</dbReference>
<dbReference type="GO" id="GO:0008094">
    <property type="term" value="F:ATP-dependent activity, acting on DNA"/>
    <property type="evidence" value="ECO:0000318"/>
    <property type="project" value="GO_Central"/>
</dbReference>
<dbReference type="GO" id="GO:0140664">
    <property type="term" value="F:ATP-dependent DNA damage sensor activity"/>
    <property type="evidence" value="ECO:0007669"/>
    <property type="project" value="InterPro"/>
</dbReference>
<dbReference type="GO" id="GO:0003682">
    <property type="term" value="F:chromatin binding"/>
    <property type="evidence" value="ECO:0007669"/>
    <property type="project" value="Ensembl"/>
</dbReference>
<dbReference type="GO" id="GO:0070182">
    <property type="term" value="F:DNA polymerase binding"/>
    <property type="evidence" value="ECO:0007669"/>
    <property type="project" value="Ensembl"/>
</dbReference>
<dbReference type="GO" id="GO:0000150">
    <property type="term" value="F:DNA strand exchange activity"/>
    <property type="evidence" value="ECO:0000318"/>
    <property type="project" value="GO_Central"/>
</dbReference>
<dbReference type="GO" id="GO:0003690">
    <property type="term" value="F:double-stranded DNA binding"/>
    <property type="evidence" value="ECO:0000250"/>
    <property type="project" value="UniProtKB"/>
</dbReference>
<dbReference type="GO" id="GO:0042802">
    <property type="term" value="F:identical protein binding"/>
    <property type="evidence" value="ECO:0007669"/>
    <property type="project" value="Ensembl"/>
</dbReference>
<dbReference type="GO" id="GO:0003697">
    <property type="term" value="F:single-stranded DNA binding"/>
    <property type="evidence" value="ECO:0000250"/>
    <property type="project" value="UniProtKB"/>
</dbReference>
<dbReference type="GO" id="GO:0017116">
    <property type="term" value="F:single-stranded DNA helicase activity"/>
    <property type="evidence" value="ECO:0000250"/>
    <property type="project" value="UniProtKB"/>
</dbReference>
<dbReference type="GO" id="GO:0072757">
    <property type="term" value="P:cellular response to camptothecin"/>
    <property type="evidence" value="ECO:0007669"/>
    <property type="project" value="Ensembl"/>
</dbReference>
<dbReference type="GO" id="GO:0072711">
    <property type="term" value="P:cellular response to hydroxyurea"/>
    <property type="evidence" value="ECO:0007669"/>
    <property type="project" value="Ensembl"/>
</dbReference>
<dbReference type="GO" id="GO:0071479">
    <property type="term" value="P:cellular response to ionizing radiation"/>
    <property type="evidence" value="ECO:0007669"/>
    <property type="project" value="Ensembl"/>
</dbReference>
<dbReference type="GO" id="GO:0070192">
    <property type="term" value="P:chromosome organization involved in meiotic cell cycle"/>
    <property type="evidence" value="ECO:0000318"/>
    <property type="project" value="GO_Central"/>
</dbReference>
<dbReference type="GO" id="GO:0006974">
    <property type="term" value="P:DNA damage response"/>
    <property type="evidence" value="ECO:0000250"/>
    <property type="project" value="UniProtKB"/>
</dbReference>
<dbReference type="GO" id="GO:0000730">
    <property type="term" value="P:DNA recombinase assembly"/>
    <property type="evidence" value="ECO:0000250"/>
    <property type="project" value="UniProtKB"/>
</dbReference>
<dbReference type="GO" id="GO:0006281">
    <property type="term" value="P:DNA repair"/>
    <property type="evidence" value="ECO:0000304"/>
    <property type="project" value="BHF-UCL"/>
</dbReference>
<dbReference type="GO" id="GO:0042148">
    <property type="term" value="P:DNA strand invasion"/>
    <property type="evidence" value="ECO:0000318"/>
    <property type="project" value="GO_Central"/>
</dbReference>
<dbReference type="GO" id="GO:1990918">
    <property type="term" value="P:double-strand break repair involved in meiotic recombination"/>
    <property type="evidence" value="ECO:0007669"/>
    <property type="project" value="Ensembl"/>
</dbReference>
<dbReference type="GO" id="GO:0000724">
    <property type="term" value="P:double-strand break repair via homologous recombination"/>
    <property type="evidence" value="ECO:0000250"/>
    <property type="project" value="UniProtKB"/>
</dbReference>
<dbReference type="GO" id="GO:0036297">
    <property type="term" value="P:interstrand cross-link repair"/>
    <property type="evidence" value="ECO:0007669"/>
    <property type="project" value="Ensembl"/>
</dbReference>
<dbReference type="GO" id="GO:0051321">
    <property type="term" value="P:meiotic cell cycle"/>
    <property type="evidence" value="ECO:0000250"/>
    <property type="project" value="UniProtKB"/>
</dbReference>
<dbReference type="GO" id="GO:0006312">
    <property type="term" value="P:mitotic recombination"/>
    <property type="evidence" value="ECO:0000318"/>
    <property type="project" value="GO_Central"/>
</dbReference>
<dbReference type="GO" id="GO:1990426">
    <property type="term" value="P:mitotic recombination-dependent replication fork processing"/>
    <property type="evidence" value="ECO:0007669"/>
    <property type="project" value="InterPro"/>
</dbReference>
<dbReference type="GO" id="GO:0007131">
    <property type="term" value="P:reciprocal meiotic recombination"/>
    <property type="evidence" value="ECO:0000318"/>
    <property type="project" value="GO_Central"/>
</dbReference>
<dbReference type="GO" id="GO:0010569">
    <property type="term" value="P:regulation of double-strand break repair via homologous recombination"/>
    <property type="evidence" value="ECO:0007669"/>
    <property type="project" value="Ensembl"/>
</dbReference>
<dbReference type="GO" id="GO:1990414">
    <property type="term" value="P:replication-born double-strand break repair via sister chromatid exchange"/>
    <property type="evidence" value="ECO:0007669"/>
    <property type="project" value="Ensembl"/>
</dbReference>
<dbReference type="GO" id="GO:0000722">
    <property type="term" value="P:telomere maintenance via recombination"/>
    <property type="evidence" value="ECO:0007669"/>
    <property type="project" value="Ensembl"/>
</dbReference>
<dbReference type="GO" id="GO:0010833">
    <property type="term" value="P:telomere maintenance via telomere lengthening"/>
    <property type="evidence" value="ECO:0007669"/>
    <property type="project" value="Ensembl"/>
</dbReference>
<dbReference type="CDD" id="cd19513">
    <property type="entry name" value="Rad51"/>
    <property type="match status" value="1"/>
</dbReference>
<dbReference type="FunFam" id="1.10.150.20:FF:000029">
    <property type="entry name" value="DNA repair protein RAD51 homolog"/>
    <property type="match status" value="1"/>
</dbReference>
<dbReference type="FunFam" id="3.40.50.300:FF:000092">
    <property type="entry name" value="DNA repair protein Rad51 homolog"/>
    <property type="match status" value="1"/>
</dbReference>
<dbReference type="Gene3D" id="1.10.150.20">
    <property type="entry name" value="5' to 3' exonuclease, C-terminal subdomain"/>
    <property type="match status" value="1"/>
</dbReference>
<dbReference type="Gene3D" id="3.40.50.300">
    <property type="entry name" value="P-loop containing nucleotide triphosphate hydrolases"/>
    <property type="match status" value="1"/>
</dbReference>
<dbReference type="InterPro" id="IPR003593">
    <property type="entry name" value="AAA+_ATPase"/>
</dbReference>
<dbReference type="InterPro" id="IPR011941">
    <property type="entry name" value="DNA_recomb/repair_Rad51"/>
</dbReference>
<dbReference type="InterPro" id="IPR013632">
    <property type="entry name" value="DNA_recomb/repair_Rad51_C"/>
</dbReference>
<dbReference type="InterPro" id="IPR016467">
    <property type="entry name" value="DNA_recomb/repair_RecA-like"/>
</dbReference>
<dbReference type="InterPro" id="IPR010995">
    <property type="entry name" value="DNA_repair_Rad51/TF_NusA_a-hlx"/>
</dbReference>
<dbReference type="InterPro" id="IPR027417">
    <property type="entry name" value="P-loop_NTPase"/>
</dbReference>
<dbReference type="InterPro" id="IPR020588">
    <property type="entry name" value="RecA_ATP-bd"/>
</dbReference>
<dbReference type="InterPro" id="IPR020587">
    <property type="entry name" value="RecA_monomer-monomer_interface"/>
</dbReference>
<dbReference type="NCBIfam" id="NF003301">
    <property type="entry name" value="PRK04301.1"/>
    <property type="match status" value="1"/>
</dbReference>
<dbReference type="NCBIfam" id="TIGR02239">
    <property type="entry name" value="recomb_RAD51"/>
    <property type="match status" value="1"/>
</dbReference>
<dbReference type="PANTHER" id="PTHR22942:SF39">
    <property type="entry name" value="DNA REPAIR PROTEIN RAD51 HOMOLOG 1"/>
    <property type="match status" value="1"/>
</dbReference>
<dbReference type="PANTHER" id="PTHR22942">
    <property type="entry name" value="RECA/RAD51/RADA DNA STRAND-PAIRING FAMILY MEMBER"/>
    <property type="match status" value="1"/>
</dbReference>
<dbReference type="Pfam" id="PF14520">
    <property type="entry name" value="HHH_5"/>
    <property type="match status" value="1"/>
</dbReference>
<dbReference type="Pfam" id="PF08423">
    <property type="entry name" value="Rad51"/>
    <property type="match status" value="1"/>
</dbReference>
<dbReference type="PIRSF" id="PIRSF005856">
    <property type="entry name" value="Rad51"/>
    <property type="match status" value="1"/>
</dbReference>
<dbReference type="SMART" id="SM00382">
    <property type="entry name" value="AAA"/>
    <property type="match status" value="1"/>
</dbReference>
<dbReference type="SUPFAM" id="SSF52540">
    <property type="entry name" value="P-loop containing nucleoside triphosphate hydrolases"/>
    <property type="match status" value="1"/>
</dbReference>
<dbReference type="SUPFAM" id="SSF47794">
    <property type="entry name" value="Rad51 N-terminal domain-like"/>
    <property type="match status" value="1"/>
</dbReference>
<dbReference type="PROSITE" id="PS50162">
    <property type="entry name" value="RECA_2"/>
    <property type="match status" value="1"/>
</dbReference>
<dbReference type="PROSITE" id="PS50163">
    <property type="entry name" value="RECA_3"/>
    <property type="match status" value="1"/>
</dbReference>
<sequence length="339" mass="36904">MAMQVQFEASTDTSAEEESFGPEPISRLEQCGINANDVKKLEEAGYHTVESVAHAPKKELLNIKGISEAKADKILAEAAKLVPMGFTTATEFHQRRSEIIQITTGSKELDKLLQGGIETGSITELFGEFRTGKTQLCHTLAVTCQLPIDRGGGEGKAMYIDTEGTFRPERLLAVAERYGLSGSDVLDNVAYARGFNTDHQTQLLYQASAMMAESRYALLIVDSATALYRTDYSGRGELSARQMHLARFLRMLLRLADEFGVAVVITNQVVAQVDGAAMFAADPKKPIGGNIIAHASTTRLYLRKGRGETRICKIYDSPCLPEAEAMFAINADGVGDAKE</sequence>
<proteinExistence type="evidence at transcript level"/>
<organism>
    <name type="scientific">Gallus gallus</name>
    <name type="common">Chicken</name>
    <dbReference type="NCBI Taxonomy" id="9031"/>
    <lineage>
        <taxon>Eukaryota</taxon>
        <taxon>Metazoa</taxon>
        <taxon>Chordata</taxon>
        <taxon>Craniata</taxon>
        <taxon>Vertebrata</taxon>
        <taxon>Euteleostomi</taxon>
        <taxon>Archelosauria</taxon>
        <taxon>Archosauria</taxon>
        <taxon>Dinosauria</taxon>
        <taxon>Saurischia</taxon>
        <taxon>Theropoda</taxon>
        <taxon>Coelurosauria</taxon>
        <taxon>Aves</taxon>
        <taxon>Neognathae</taxon>
        <taxon>Galloanserae</taxon>
        <taxon>Galliformes</taxon>
        <taxon>Phasianidae</taxon>
        <taxon>Phasianinae</taxon>
        <taxon>Gallus</taxon>
    </lineage>
</organism>
<reference key="1">
    <citation type="journal article" date="1993" name="Nucleic Acids Res.">
        <title>A chicken RAD51 homologue is expressed at high levels in lymphoid and reproductive organs.</title>
        <authorList>
            <person name="Bezzubova O.Y."/>
            <person name="Shinohara A."/>
            <person name="Mueller R.G."/>
            <person name="Ogawa H."/>
            <person name="Buerstedde J.-M."/>
        </authorList>
    </citation>
    <scope>NUCLEOTIDE SEQUENCE [MRNA]</scope>
    <scope>TISSUE SPECIFICITY</scope>
</reference>
<gene>
    <name type="primary">RAD51A</name>
    <name type="synonym">RAD51</name>
</gene>
<comment type="function">
    <text evidence="2">Plays an important role in homologous strand exchange, a key step in DNA repair through homologous recombination (HR). Binds to single-stranded DNA in an ATP-dependent manner to form nucleoprotein filaments which are essential for the homology search and strand exchange. Catalyzes the recognition of homology and strand exchange between homologous DNA partners to form a joint molecule between a processed DNA break and the repair template. Recruited to resolve stalled replication forks during replication stress. Also involved in interstrand cross-link repair.</text>
</comment>
<comment type="subunit">
    <text evidence="2">Forms linear homooligomers, giving rise to a RAD51 nucleoprotein filament, which is essential for strand-pairing reactions during DNA recombination.</text>
</comment>
<comment type="subcellular location">
    <subcellularLocation>
        <location evidence="2">Nucleus</location>
    </subcellularLocation>
    <subcellularLocation>
        <location evidence="2">Cytoplasm</location>
    </subcellularLocation>
    <subcellularLocation>
        <location evidence="2">Chromosome</location>
    </subcellularLocation>
    <text evidence="2">Accumulated at sites of DNA damage. Recruited to stalled replication forks during replication stress.</text>
</comment>
<comment type="tissue specificity">
    <text evidence="4">Expressed at high levels in lymphoid and reproductive organs.</text>
</comment>
<comment type="similarity">
    <text evidence="5">Belongs to the RecA family. RAD51 subfamily.</text>
</comment>
<name>RAD51_CHICK</name>
<evidence type="ECO:0000250" key="1"/>
<evidence type="ECO:0000250" key="2">
    <source>
        <dbReference type="UniProtKB" id="Q06609"/>
    </source>
</evidence>
<evidence type="ECO:0000256" key="3">
    <source>
        <dbReference type="SAM" id="MobiDB-lite"/>
    </source>
</evidence>
<evidence type="ECO:0000269" key="4">
    <source>
    </source>
</evidence>
<evidence type="ECO:0000305" key="5"/>
<protein>
    <recommendedName>
        <fullName>DNA repair protein RAD51 homolog 1</fullName>
    </recommendedName>
</protein>
<accession>P37383</accession>